<evidence type="ECO:0000255" key="1">
    <source>
        <dbReference type="HAMAP-Rule" id="MF_00382"/>
    </source>
</evidence>
<evidence type="ECO:0000305" key="2"/>
<accession>Q49YB0</accession>
<comment type="function">
    <text evidence="1">Binds directly to 23S ribosomal RNA and is necessary for the in vitro assembly process of the 50S ribosomal subunit. It is not involved in the protein synthesizing functions of that subunit.</text>
</comment>
<comment type="similarity">
    <text evidence="1">Belongs to the bacterial ribosomal protein bL20 family.</text>
</comment>
<keyword id="KW-1185">Reference proteome</keyword>
<keyword id="KW-0687">Ribonucleoprotein</keyword>
<keyword id="KW-0689">Ribosomal protein</keyword>
<keyword id="KW-0694">RNA-binding</keyword>
<keyword id="KW-0699">rRNA-binding</keyword>
<sequence length="118" mass="13720">MPRVKGGTVTRARRKKTIKLAKGYFGSKRTLYKVAKQQVMKSGQYAFRDRRQRKRDFRKLWITRINAAARQHDMSYSRLMNGLKKAEIDINRKMLSEIAISDEKAFGELVAKAKDALK</sequence>
<gene>
    <name evidence="1" type="primary">rplT</name>
    <name type="ordered locus">SSP1086</name>
</gene>
<protein>
    <recommendedName>
        <fullName evidence="1">Large ribosomal subunit protein bL20</fullName>
    </recommendedName>
    <alternativeName>
        <fullName evidence="2">50S ribosomal protein L20</fullName>
    </alternativeName>
</protein>
<proteinExistence type="inferred from homology"/>
<name>RL20_STAS1</name>
<reference key="1">
    <citation type="journal article" date="2005" name="Proc. Natl. Acad. Sci. U.S.A.">
        <title>Whole genome sequence of Staphylococcus saprophyticus reveals the pathogenesis of uncomplicated urinary tract infection.</title>
        <authorList>
            <person name="Kuroda M."/>
            <person name="Yamashita A."/>
            <person name="Hirakawa H."/>
            <person name="Kumano M."/>
            <person name="Morikawa K."/>
            <person name="Higashide M."/>
            <person name="Maruyama A."/>
            <person name="Inose Y."/>
            <person name="Matoba K."/>
            <person name="Toh H."/>
            <person name="Kuhara S."/>
            <person name="Hattori M."/>
            <person name="Ohta T."/>
        </authorList>
    </citation>
    <scope>NUCLEOTIDE SEQUENCE [LARGE SCALE GENOMIC DNA]</scope>
    <source>
        <strain>ATCC 15305 / DSM 20229 / NCIMB 8711 / NCTC 7292 / S-41</strain>
    </source>
</reference>
<feature type="chain" id="PRO_0000177232" description="Large ribosomal subunit protein bL20">
    <location>
        <begin position="1"/>
        <end position="118"/>
    </location>
</feature>
<organism>
    <name type="scientific">Staphylococcus saprophyticus subsp. saprophyticus (strain ATCC 15305 / DSM 20229 / NCIMB 8711 / NCTC 7292 / S-41)</name>
    <dbReference type="NCBI Taxonomy" id="342451"/>
    <lineage>
        <taxon>Bacteria</taxon>
        <taxon>Bacillati</taxon>
        <taxon>Bacillota</taxon>
        <taxon>Bacilli</taxon>
        <taxon>Bacillales</taxon>
        <taxon>Staphylococcaceae</taxon>
        <taxon>Staphylococcus</taxon>
    </lineage>
</organism>
<dbReference type="EMBL" id="AP008934">
    <property type="protein sequence ID" value="BAE18231.1"/>
    <property type="molecule type" value="Genomic_DNA"/>
</dbReference>
<dbReference type="RefSeq" id="WP_002483065.1">
    <property type="nucleotide sequence ID" value="NZ_MTGA01000038.1"/>
</dbReference>
<dbReference type="SMR" id="Q49YB0"/>
<dbReference type="GeneID" id="66867319"/>
<dbReference type="KEGG" id="ssp:SSP1086"/>
<dbReference type="eggNOG" id="COG0292">
    <property type="taxonomic scope" value="Bacteria"/>
</dbReference>
<dbReference type="HOGENOM" id="CLU_123265_0_1_9"/>
<dbReference type="OrthoDB" id="9808966at2"/>
<dbReference type="Proteomes" id="UP000006371">
    <property type="component" value="Chromosome"/>
</dbReference>
<dbReference type="GO" id="GO:1990904">
    <property type="term" value="C:ribonucleoprotein complex"/>
    <property type="evidence" value="ECO:0007669"/>
    <property type="project" value="UniProtKB-KW"/>
</dbReference>
<dbReference type="GO" id="GO:0005840">
    <property type="term" value="C:ribosome"/>
    <property type="evidence" value="ECO:0007669"/>
    <property type="project" value="UniProtKB-KW"/>
</dbReference>
<dbReference type="GO" id="GO:0019843">
    <property type="term" value="F:rRNA binding"/>
    <property type="evidence" value="ECO:0007669"/>
    <property type="project" value="UniProtKB-UniRule"/>
</dbReference>
<dbReference type="GO" id="GO:0003735">
    <property type="term" value="F:structural constituent of ribosome"/>
    <property type="evidence" value="ECO:0007669"/>
    <property type="project" value="InterPro"/>
</dbReference>
<dbReference type="GO" id="GO:0000027">
    <property type="term" value="P:ribosomal large subunit assembly"/>
    <property type="evidence" value="ECO:0007669"/>
    <property type="project" value="UniProtKB-UniRule"/>
</dbReference>
<dbReference type="GO" id="GO:0006412">
    <property type="term" value="P:translation"/>
    <property type="evidence" value="ECO:0007669"/>
    <property type="project" value="InterPro"/>
</dbReference>
<dbReference type="CDD" id="cd07026">
    <property type="entry name" value="Ribosomal_L20"/>
    <property type="match status" value="1"/>
</dbReference>
<dbReference type="FunFam" id="1.10.1900.20:FF:000001">
    <property type="entry name" value="50S ribosomal protein L20"/>
    <property type="match status" value="1"/>
</dbReference>
<dbReference type="Gene3D" id="6.10.160.10">
    <property type="match status" value="1"/>
</dbReference>
<dbReference type="Gene3D" id="1.10.1900.20">
    <property type="entry name" value="Ribosomal protein L20"/>
    <property type="match status" value="1"/>
</dbReference>
<dbReference type="HAMAP" id="MF_00382">
    <property type="entry name" value="Ribosomal_bL20"/>
    <property type="match status" value="1"/>
</dbReference>
<dbReference type="InterPro" id="IPR005813">
    <property type="entry name" value="Ribosomal_bL20"/>
</dbReference>
<dbReference type="InterPro" id="IPR049946">
    <property type="entry name" value="RIBOSOMAL_L20_CS"/>
</dbReference>
<dbReference type="InterPro" id="IPR035566">
    <property type="entry name" value="Ribosomal_protein_bL20_C"/>
</dbReference>
<dbReference type="NCBIfam" id="TIGR01032">
    <property type="entry name" value="rplT_bact"/>
    <property type="match status" value="1"/>
</dbReference>
<dbReference type="PANTHER" id="PTHR10986">
    <property type="entry name" value="39S RIBOSOMAL PROTEIN L20"/>
    <property type="match status" value="1"/>
</dbReference>
<dbReference type="Pfam" id="PF00453">
    <property type="entry name" value="Ribosomal_L20"/>
    <property type="match status" value="1"/>
</dbReference>
<dbReference type="PRINTS" id="PR00062">
    <property type="entry name" value="RIBOSOMALL20"/>
</dbReference>
<dbReference type="SUPFAM" id="SSF74731">
    <property type="entry name" value="Ribosomal protein L20"/>
    <property type="match status" value="1"/>
</dbReference>
<dbReference type="PROSITE" id="PS00937">
    <property type="entry name" value="RIBOSOMAL_L20"/>
    <property type="match status" value="1"/>
</dbReference>